<organism>
    <name type="scientific">Erythrobacter litoralis (strain HTCC2594)</name>
    <dbReference type="NCBI Taxonomy" id="314225"/>
    <lineage>
        <taxon>Bacteria</taxon>
        <taxon>Pseudomonadati</taxon>
        <taxon>Pseudomonadota</taxon>
        <taxon>Alphaproteobacteria</taxon>
        <taxon>Sphingomonadales</taxon>
        <taxon>Erythrobacteraceae</taxon>
        <taxon>Erythrobacter/Porphyrobacter group</taxon>
        <taxon>Erythrobacter</taxon>
    </lineage>
</organism>
<gene>
    <name evidence="1" type="primary">prfA</name>
    <name type="ordered locus">ELI_14265</name>
</gene>
<feature type="chain" id="PRO_1000004889" description="Peptide chain release factor 1">
    <location>
        <begin position="1"/>
        <end position="355"/>
    </location>
</feature>
<feature type="modified residue" description="N5-methylglutamine" evidence="1">
    <location>
        <position position="231"/>
    </location>
</feature>
<name>RF1_ERYLH</name>
<reference key="1">
    <citation type="journal article" date="2009" name="J. Bacteriol.">
        <title>Complete genome sequence of Erythrobacter litoralis HTCC2594.</title>
        <authorList>
            <person name="Oh H.M."/>
            <person name="Giovannoni S.J."/>
            <person name="Ferriera S."/>
            <person name="Johnson J."/>
            <person name="Cho J.C."/>
        </authorList>
    </citation>
    <scope>NUCLEOTIDE SEQUENCE [LARGE SCALE GENOMIC DNA]</scope>
    <source>
        <strain>HTCC2594</strain>
    </source>
</reference>
<evidence type="ECO:0000255" key="1">
    <source>
        <dbReference type="HAMAP-Rule" id="MF_00093"/>
    </source>
</evidence>
<protein>
    <recommendedName>
        <fullName evidence="1">Peptide chain release factor 1</fullName>
        <shortName evidence="1">RF-1</shortName>
    </recommendedName>
</protein>
<comment type="function">
    <text evidence="1">Peptide chain release factor 1 directs the termination of translation in response to the peptide chain termination codons UAG and UAA.</text>
</comment>
<comment type="subcellular location">
    <subcellularLocation>
        <location evidence="1">Cytoplasm</location>
    </subcellularLocation>
</comment>
<comment type="PTM">
    <text evidence="1">Methylated by PrmC. Methylation increases the termination efficiency of RF1.</text>
</comment>
<comment type="similarity">
    <text evidence="1">Belongs to the prokaryotic/mitochondrial release factor family.</text>
</comment>
<dbReference type="EMBL" id="CP000157">
    <property type="protein sequence ID" value="ABC64945.1"/>
    <property type="molecule type" value="Genomic_DNA"/>
</dbReference>
<dbReference type="RefSeq" id="WP_011415767.1">
    <property type="nucleotide sequence ID" value="NC_007722.1"/>
</dbReference>
<dbReference type="SMR" id="Q2N5U6"/>
<dbReference type="STRING" id="314225.ELI_14265"/>
<dbReference type="KEGG" id="eli:ELI_14265"/>
<dbReference type="eggNOG" id="COG0216">
    <property type="taxonomic scope" value="Bacteria"/>
</dbReference>
<dbReference type="HOGENOM" id="CLU_036856_0_1_5"/>
<dbReference type="OrthoDB" id="9806673at2"/>
<dbReference type="Proteomes" id="UP000008808">
    <property type="component" value="Chromosome"/>
</dbReference>
<dbReference type="GO" id="GO:0005737">
    <property type="term" value="C:cytoplasm"/>
    <property type="evidence" value="ECO:0007669"/>
    <property type="project" value="UniProtKB-SubCell"/>
</dbReference>
<dbReference type="GO" id="GO:0016149">
    <property type="term" value="F:translation release factor activity, codon specific"/>
    <property type="evidence" value="ECO:0007669"/>
    <property type="project" value="UniProtKB-UniRule"/>
</dbReference>
<dbReference type="FunFam" id="3.30.160.20:FF:000004">
    <property type="entry name" value="Peptide chain release factor 1"/>
    <property type="match status" value="1"/>
</dbReference>
<dbReference type="FunFam" id="3.30.70.1660:FF:000002">
    <property type="entry name" value="Peptide chain release factor 1"/>
    <property type="match status" value="1"/>
</dbReference>
<dbReference type="FunFam" id="3.30.70.1660:FF:000004">
    <property type="entry name" value="Peptide chain release factor 1"/>
    <property type="match status" value="1"/>
</dbReference>
<dbReference type="Gene3D" id="3.30.160.20">
    <property type="match status" value="1"/>
</dbReference>
<dbReference type="Gene3D" id="3.30.70.1660">
    <property type="match status" value="1"/>
</dbReference>
<dbReference type="Gene3D" id="6.10.140.1950">
    <property type="match status" value="1"/>
</dbReference>
<dbReference type="HAMAP" id="MF_00093">
    <property type="entry name" value="Rel_fac_1"/>
    <property type="match status" value="1"/>
</dbReference>
<dbReference type="InterPro" id="IPR005139">
    <property type="entry name" value="PCRF"/>
</dbReference>
<dbReference type="InterPro" id="IPR000352">
    <property type="entry name" value="Pep_chain_release_fac_I"/>
</dbReference>
<dbReference type="InterPro" id="IPR045853">
    <property type="entry name" value="Pep_chain_release_fac_I_sf"/>
</dbReference>
<dbReference type="InterPro" id="IPR050057">
    <property type="entry name" value="Prokaryotic/Mito_RF"/>
</dbReference>
<dbReference type="InterPro" id="IPR004373">
    <property type="entry name" value="RF-1"/>
</dbReference>
<dbReference type="NCBIfam" id="TIGR00019">
    <property type="entry name" value="prfA"/>
    <property type="match status" value="1"/>
</dbReference>
<dbReference type="NCBIfam" id="NF001859">
    <property type="entry name" value="PRK00591.1"/>
    <property type="match status" value="1"/>
</dbReference>
<dbReference type="PANTHER" id="PTHR43804">
    <property type="entry name" value="LD18447P"/>
    <property type="match status" value="1"/>
</dbReference>
<dbReference type="PANTHER" id="PTHR43804:SF7">
    <property type="entry name" value="LD18447P"/>
    <property type="match status" value="1"/>
</dbReference>
<dbReference type="Pfam" id="PF03462">
    <property type="entry name" value="PCRF"/>
    <property type="match status" value="1"/>
</dbReference>
<dbReference type="Pfam" id="PF00472">
    <property type="entry name" value="RF-1"/>
    <property type="match status" value="1"/>
</dbReference>
<dbReference type="SMART" id="SM00937">
    <property type="entry name" value="PCRF"/>
    <property type="match status" value="1"/>
</dbReference>
<dbReference type="SUPFAM" id="SSF75620">
    <property type="entry name" value="Release factor"/>
    <property type="match status" value="1"/>
</dbReference>
<dbReference type="PROSITE" id="PS00745">
    <property type="entry name" value="RF_PROK_I"/>
    <property type="match status" value="1"/>
</dbReference>
<keyword id="KW-0963">Cytoplasm</keyword>
<keyword id="KW-0488">Methylation</keyword>
<keyword id="KW-0648">Protein biosynthesis</keyword>
<keyword id="KW-1185">Reference proteome</keyword>
<sequence length="355" mass="38725">MTIPATRLDQIANRFAELEARMASGTLEGEEFVQASRDYAELEPVAKVAAEVKAMREEIGGLEEMLADPEMKAMAQEELAAIREALPEKERQLAIAMLPKDSADNKPAMLEIRAGTGGDEAALFAGDLYRMYERFAGEQGWKVEPVSMNASEVGGFKEIVANVSGTGVFAKLKFESGVHRVQRVPETESGGRIHTSAATVAVLPEPDEVDVQIDDKDLKIDIYRASGAGGQHVNTTDSAVRITHLPTGIVVQQQDERSQHKNKAKAMQVLRTRLYDHLREQSQGEEAAARKAMVGSGDRSERIRTYNFPQGRVTDHRIGLTLHKLDEIIAGPGLGELVGALIAEDEAKRLAALSE</sequence>
<proteinExistence type="inferred from homology"/>
<accession>Q2N5U6</accession>